<feature type="chain" id="PRO_0000387085" description="Ribosomal RNA small subunit methyltransferase H">
    <location>
        <begin position="1"/>
        <end position="329"/>
    </location>
</feature>
<feature type="region of interest" description="Disordered" evidence="2">
    <location>
        <begin position="297"/>
        <end position="329"/>
    </location>
</feature>
<feature type="binding site" evidence="1">
    <location>
        <begin position="44"/>
        <end position="46"/>
    </location>
    <ligand>
        <name>S-adenosyl-L-methionine</name>
        <dbReference type="ChEBI" id="CHEBI:59789"/>
    </ligand>
</feature>
<feature type="binding site" evidence="1">
    <location>
        <position position="62"/>
    </location>
    <ligand>
        <name>S-adenosyl-L-methionine</name>
        <dbReference type="ChEBI" id="CHEBI:59789"/>
    </ligand>
</feature>
<feature type="binding site" evidence="1">
    <location>
        <position position="110"/>
    </location>
    <ligand>
        <name>S-adenosyl-L-methionine</name>
        <dbReference type="ChEBI" id="CHEBI:59789"/>
    </ligand>
</feature>
<feature type="binding site" evidence="1">
    <location>
        <position position="117"/>
    </location>
    <ligand>
        <name>S-adenosyl-L-methionine</name>
        <dbReference type="ChEBI" id="CHEBI:59789"/>
    </ligand>
</feature>
<proteinExistence type="inferred from homology"/>
<keyword id="KW-0963">Cytoplasm</keyword>
<keyword id="KW-0489">Methyltransferase</keyword>
<keyword id="KW-1185">Reference proteome</keyword>
<keyword id="KW-0698">rRNA processing</keyword>
<keyword id="KW-0949">S-adenosyl-L-methionine</keyword>
<keyword id="KW-0808">Transferase</keyword>
<accession>B6IRH0</accession>
<evidence type="ECO:0000255" key="1">
    <source>
        <dbReference type="HAMAP-Rule" id="MF_01007"/>
    </source>
</evidence>
<evidence type="ECO:0000256" key="2">
    <source>
        <dbReference type="SAM" id="MobiDB-lite"/>
    </source>
</evidence>
<gene>
    <name evidence="1" type="primary">rsmH</name>
    <name type="synonym">mraW</name>
    <name type="ordered locus">RC1_0621</name>
</gene>
<organism>
    <name type="scientific">Rhodospirillum centenum (strain ATCC 51521 / SW)</name>
    <dbReference type="NCBI Taxonomy" id="414684"/>
    <lineage>
        <taxon>Bacteria</taxon>
        <taxon>Pseudomonadati</taxon>
        <taxon>Pseudomonadota</taxon>
        <taxon>Alphaproteobacteria</taxon>
        <taxon>Rhodospirillales</taxon>
        <taxon>Rhodospirillaceae</taxon>
        <taxon>Rhodospirillum</taxon>
    </lineage>
</organism>
<comment type="function">
    <text evidence="1">Specifically methylates the N4 position of cytidine in position 1402 (C1402) of 16S rRNA.</text>
</comment>
<comment type="catalytic activity">
    <reaction evidence="1">
        <text>cytidine(1402) in 16S rRNA + S-adenosyl-L-methionine = N(4)-methylcytidine(1402) in 16S rRNA + S-adenosyl-L-homocysteine + H(+)</text>
        <dbReference type="Rhea" id="RHEA:42928"/>
        <dbReference type="Rhea" id="RHEA-COMP:10286"/>
        <dbReference type="Rhea" id="RHEA-COMP:10287"/>
        <dbReference type="ChEBI" id="CHEBI:15378"/>
        <dbReference type="ChEBI" id="CHEBI:57856"/>
        <dbReference type="ChEBI" id="CHEBI:59789"/>
        <dbReference type="ChEBI" id="CHEBI:74506"/>
        <dbReference type="ChEBI" id="CHEBI:82748"/>
        <dbReference type="EC" id="2.1.1.199"/>
    </reaction>
</comment>
<comment type="subcellular location">
    <subcellularLocation>
        <location evidence="1">Cytoplasm</location>
    </subcellularLocation>
</comment>
<comment type="similarity">
    <text evidence="1">Belongs to the methyltransferase superfamily. RsmH family.</text>
</comment>
<dbReference type="EC" id="2.1.1.199" evidence="1"/>
<dbReference type="EMBL" id="CP000613">
    <property type="protein sequence ID" value="ACI98056.1"/>
    <property type="molecule type" value="Genomic_DNA"/>
</dbReference>
<dbReference type="SMR" id="B6IRH0"/>
<dbReference type="STRING" id="414684.RC1_0621"/>
<dbReference type="KEGG" id="rce:RC1_0621"/>
<dbReference type="eggNOG" id="COG0275">
    <property type="taxonomic scope" value="Bacteria"/>
</dbReference>
<dbReference type="HOGENOM" id="CLU_038422_1_1_5"/>
<dbReference type="OrthoDB" id="9806637at2"/>
<dbReference type="Proteomes" id="UP000001591">
    <property type="component" value="Chromosome"/>
</dbReference>
<dbReference type="GO" id="GO:0005737">
    <property type="term" value="C:cytoplasm"/>
    <property type="evidence" value="ECO:0007669"/>
    <property type="project" value="UniProtKB-SubCell"/>
</dbReference>
<dbReference type="GO" id="GO:0071424">
    <property type="term" value="F:rRNA (cytosine-N4-)-methyltransferase activity"/>
    <property type="evidence" value="ECO:0007669"/>
    <property type="project" value="UniProtKB-UniRule"/>
</dbReference>
<dbReference type="GO" id="GO:0070475">
    <property type="term" value="P:rRNA base methylation"/>
    <property type="evidence" value="ECO:0007669"/>
    <property type="project" value="UniProtKB-UniRule"/>
</dbReference>
<dbReference type="FunFam" id="1.10.150.170:FF:000003">
    <property type="entry name" value="Ribosomal RNA small subunit methyltransferase H"/>
    <property type="match status" value="1"/>
</dbReference>
<dbReference type="Gene3D" id="1.10.150.170">
    <property type="entry name" value="Putative methyltransferase TM0872, insert domain"/>
    <property type="match status" value="1"/>
</dbReference>
<dbReference type="Gene3D" id="3.40.50.150">
    <property type="entry name" value="Vaccinia Virus protein VP39"/>
    <property type="match status" value="1"/>
</dbReference>
<dbReference type="HAMAP" id="MF_01007">
    <property type="entry name" value="16SrRNA_methyltr_H"/>
    <property type="match status" value="1"/>
</dbReference>
<dbReference type="InterPro" id="IPR002903">
    <property type="entry name" value="RsmH"/>
</dbReference>
<dbReference type="InterPro" id="IPR023397">
    <property type="entry name" value="SAM-dep_MeTrfase_MraW_recog"/>
</dbReference>
<dbReference type="InterPro" id="IPR029063">
    <property type="entry name" value="SAM-dependent_MTases_sf"/>
</dbReference>
<dbReference type="NCBIfam" id="TIGR00006">
    <property type="entry name" value="16S rRNA (cytosine(1402)-N(4))-methyltransferase RsmH"/>
    <property type="match status" value="1"/>
</dbReference>
<dbReference type="PANTHER" id="PTHR11265:SF0">
    <property type="entry name" value="12S RRNA N4-METHYLCYTIDINE METHYLTRANSFERASE"/>
    <property type="match status" value="1"/>
</dbReference>
<dbReference type="PANTHER" id="PTHR11265">
    <property type="entry name" value="S-ADENOSYL-METHYLTRANSFERASE MRAW"/>
    <property type="match status" value="1"/>
</dbReference>
<dbReference type="Pfam" id="PF01795">
    <property type="entry name" value="Methyltransf_5"/>
    <property type="match status" value="1"/>
</dbReference>
<dbReference type="PIRSF" id="PIRSF004486">
    <property type="entry name" value="MraW"/>
    <property type="match status" value="1"/>
</dbReference>
<dbReference type="SUPFAM" id="SSF81799">
    <property type="entry name" value="Putative methyltransferase TM0872, insert domain"/>
    <property type="match status" value="1"/>
</dbReference>
<dbReference type="SUPFAM" id="SSF53335">
    <property type="entry name" value="S-adenosyl-L-methionine-dependent methyltransferases"/>
    <property type="match status" value="1"/>
</dbReference>
<sequence>MTAGPTPGAVDAPSLHIPVLRDEVVDALAPRDGAVLVDGTFGAGGYTAALLASAACTVWAIDRDPAAVARGHALAARHPGRLTVLDGTFGCMESLLAAHGITRVDGIALDIGVSSPQIDDPSRGFSFRFDGPLDMRMGSHGTTAADIVNERDEAEIADIVWRYGEERHSRRVARAIVARRREAPITRTLDLAEIVRSVVPKSKDGIDPATRTFQALRIAVNDELGELERGLAAAERLLAPGGRLAVVTFHSLEDRVVKEFLRSRSAAAPAPSRHLPAPADAPAPTFRLIARSGVTPAPAELAANPRARSARLRSAERTSAPARRLGDAA</sequence>
<protein>
    <recommendedName>
        <fullName evidence="1">Ribosomal RNA small subunit methyltransferase H</fullName>
        <ecNumber evidence="1">2.1.1.199</ecNumber>
    </recommendedName>
    <alternativeName>
        <fullName evidence="1">16S rRNA m(4)C1402 methyltransferase</fullName>
    </alternativeName>
    <alternativeName>
        <fullName evidence="1">rRNA (cytosine-N(4)-)-methyltransferase RsmH</fullName>
    </alternativeName>
</protein>
<name>RSMH_RHOCS</name>
<reference key="1">
    <citation type="submission" date="2007-03" db="EMBL/GenBank/DDBJ databases">
        <title>Genome sequence of Rhodospirillum centenum.</title>
        <authorList>
            <person name="Touchman J.W."/>
            <person name="Bauer C."/>
            <person name="Blankenship R.E."/>
        </authorList>
    </citation>
    <scope>NUCLEOTIDE SEQUENCE [LARGE SCALE GENOMIC DNA]</scope>
    <source>
        <strain>ATCC 51521 / SW</strain>
    </source>
</reference>